<gene>
    <name type="primary">cry1Ab</name>
    <name type="synonym">bt2</name>
    <name type="synonym">cry-1-2</name>
    <name type="synonym">cry1A(b)</name>
    <name type="synonym">cryIA(b)</name>
    <name type="synonym">cryIC1</name>
</gene>
<comment type="function">
    <text>Promotes colloidosmotic lysis by binding to the midgut epithelial cells of many lepidopteran larvae.</text>
</comment>
<comment type="developmental stage">
    <text>The crystal protein is produced during sporulation and is accumulated both as an inclusion and as part of the spore coat.</text>
</comment>
<comment type="biotechnology">
    <text>Introduced by genetic manipulation and expressed in insect-resistant maize by Monsanto, Northrup King and Ciba Geigy.</text>
</comment>
<comment type="miscellaneous">
    <text>Toxic segment of the protein is located in the N-terminus.</text>
</comment>
<comment type="miscellaneous">
    <text evidence="1">In strain S93 this is encoded on plasmid pUCBtS39.</text>
</comment>
<comment type="similarity">
    <text evidence="2">Belongs to the delta endotoxin family.</text>
</comment>
<keyword id="KW-0308">Genetically modified food</keyword>
<keyword id="KW-0614">Plasmid</keyword>
<keyword id="KW-0749">Sporulation</keyword>
<keyword id="KW-0800">Toxin</keyword>
<keyword id="KW-0843">Virulence</keyword>
<accession>P0A370</accession>
<accession>P06577</accession>
<accession>P06578</accession>
<accession>P09663</accession>
<accession>P09666</accession>
<accession>P09667</accession>
<accession>P21257</accession>
<accession>Q45789</accession>
<evidence type="ECO:0000269" key="1">
    <source ref="6"/>
</evidence>
<evidence type="ECO:0000305" key="2"/>
<dbReference type="EMBL" id="M15271">
    <property type="protein sequence ID" value="AAA22561.1"/>
    <property type="molecule type" value="Genomic_DNA"/>
</dbReference>
<dbReference type="EMBL" id="M12661">
    <property type="protein sequence ID" value="AAA22613.1"/>
    <property type="molecule type" value="Genomic_DNA"/>
</dbReference>
<dbReference type="EMBL" id="D00117">
    <property type="protein sequence ID" value="BAA00071.1"/>
    <property type="molecule type" value="Genomic_DNA"/>
</dbReference>
<dbReference type="EMBL" id="M37263">
    <property type="protein sequence ID" value="AAA22420.1"/>
    <property type="molecule type" value="Genomic_DNA"/>
</dbReference>
<dbReference type="EMBL" id="AF059670">
    <property type="protein sequence ID" value="AAC64003.1"/>
    <property type="molecule type" value="Genomic_DNA"/>
</dbReference>
<dbReference type="EMBL" id="A03793">
    <property type="protein sequence ID" value="CAA00303.1"/>
    <property type="molecule type" value="Unassigned_DNA"/>
</dbReference>
<dbReference type="EMBL" id="A09398">
    <property type="protein sequence ID" value="CAA00840.1"/>
    <property type="molecule type" value="Unassigned_DNA"/>
</dbReference>
<dbReference type="PIR" id="A29125">
    <property type="entry name" value="A29125"/>
</dbReference>
<dbReference type="PIR" id="A29838">
    <property type="entry name" value="A29838"/>
</dbReference>
<dbReference type="PIR" id="A90025">
    <property type="entry name" value="JD0002"/>
</dbReference>
<dbReference type="PIR" id="I39838">
    <property type="entry name" value="I39838"/>
</dbReference>
<dbReference type="RefSeq" id="WP_000369819.1">
    <property type="nucleotide sequence ID" value="NZ_PGEH01000375.1"/>
</dbReference>
<dbReference type="SMR" id="P0A370"/>
<dbReference type="TCDB" id="1.C.2.1.3">
    <property type="family name" value="the channel-forming Delta-endotoxin insecticidal crystal protein (icp) family"/>
</dbReference>
<dbReference type="GO" id="GO:0005102">
    <property type="term" value="F:signaling receptor binding"/>
    <property type="evidence" value="ECO:0007669"/>
    <property type="project" value="InterPro"/>
</dbReference>
<dbReference type="GO" id="GO:0090729">
    <property type="term" value="F:toxin activity"/>
    <property type="evidence" value="ECO:0007669"/>
    <property type="project" value="UniProtKB-KW"/>
</dbReference>
<dbReference type="GO" id="GO:0030435">
    <property type="term" value="P:sporulation resulting in formation of a cellular spore"/>
    <property type="evidence" value="ECO:0007669"/>
    <property type="project" value="UniProtKB-KW"/>
</dbReference>
<dbReference type="GO" id="GO:0001907">
    <property type="term" value="P:symbiont-mediated killing of host cell"/>
    <property type="evidence" value="ECO:0007669"/>
    <property type="project" value="InterPro"/>
</dbReference>
<dbReference type="CDD" id="cd04085">
    <property type="entry name" value="delta_endotoxin_C"/>
    <property type="match status" value="1"/>
</dbReference>
<dbReference type="Gene3D" id="2.60.120.260">
    <property type="entry name" value="Galactose-binding domain-like"/>
    <property type="match status" value="2"/>
</dbReference>
<dbReference type="Gene3D" id="2.100.10.10">
    <property type="entry name" value="Pesticidal crystal protein, central domain"/>
    <property type="match status" value="1"/>
</dbReference>
<dbReference type="Gene3D" id="1.20.190.10">
    <property type="entry name" value="Pesticidal crystal protein, N-terminal domain"/>
    <property type="match status" value="1"/>
</dbReference>
<dbReference type="InterPro" id="IPR048645">
    <property type="entry name" value="Cry1Ac-like_dom-VII"/>
</dbReference>
<dbReference type="InterPro" id="IPR041587">
    <property type="entry name" value="Cry_V"/>
</dbReference>
<dbReference type="InterPro" id="IPR008979">
    <property type="entry name" value="Galactose-bd-like_sf"/>
</dbReference>
<dbReference type="InterPro" id="IPR038979">
    <property type="entry name" value="Pest_crys"/>
</dbReference>
<dbReference type="InterPro" id="IPR054544">
    <property type="entry name" value="Pest_crys_Cry1Aa_dom-IV"/>
</dbReference>
<dbReference type="InterPro" id="IPR005638">
    <property type="entry name" value="Pest_crys_dom-III"/>
</dbReference>
<dbReference type="InterPro" id="IPR005639">
    <property type="entry name" value="Pest_crys_dom_I"/>
</dbReference>
<dbReference type="InterPro" id="IPR036716">
    <property type="entry name" value="Pest_crys_N_sf"/>
</dbReference>
<dbReference type="InterPro" id="IPR036399">
    <property type="entry name" value="Pest_cryst_cen_dom_sf"/>
</dbReference>
<dbReference type="InterPro" id="IPR001178">
    <property type="entry name" value="Pest_cryst_dom_II"/>
</dbReference>
<dbReference type="PANTHER" id="PTHR37003">
    <property type="entry name" value="ENDOTOXIN_N DOMAIN-CONTAINING PROTEIN-RELATED"/>
    <property type="match status" value="1"/>
</dbReference>
<dbReference type="PANTHER" id="PTHR37003:SF2">
    <property type="entry name" value="PESTICIDAL CRYSTAL PROTEIN N-TERMINAL DOMAIN-CONTAINING PROTEIN"/>
    <property type="match status" value="1"/>
</dbReference>
<dbReference type="Pfam" id="PF17997">
    <property type="entry name" value="Cry1Ac_D5"/>
    <property type="match status" value="1"/>
</dbReference>
<dbReference type="Pfam" id="PF21463">
    <property type="entry name" value="Cry1Ac_dom-VII"/>
    <property type="match status" value="1"/>
</dbReference>
<dbReference type="Pfam" id="PF03944">
    <property type="entry name" value="Endotoxin_C"/>
    <property type="match status" value="1"/>
</dbReference>
<dbReference type="Pfam" id="PF18449">
    <property type="entry name" value="Endotoxin_C2"/>
    <property type="match status" value="1"/>
</dbReference>
<dbReference type="Pfam" id="PF00555">
    <property type="entry name" value="Endotoxin_M"/>
    <property type="match status" value="1"/>
</dbReference>
<dbReference type="Pfam" id="PF03945">
    <property type="entry name" value="Endotoxin_N"/>
    <property type="match status" value="1"/>
</dbReference>
<dbReference type="SUPFAM" id="SSF51096">
    <property type="entry name" value="delta-Endotoxin (insectocide), middle domain"/>
    <property type="match status" value="1"/>
</dbReference>
<dbReference type="SUPFAM" id="SSF56849">
    <property type="entry name" value="delta-Endotoxin (insectocide), N-terminal domain"/>
    <property type="match status" value="1"/>
</dbReference>
<dbReference type="SUPFAM" id="SSF49785">
    <property type="entry name" value="Galactose-binding domain-like"/>
    <property type="match status" value="1"/>
</dbReference>
<name>CR1AB_BACTK</name>
<geneLocation type="plasmid">
    <name>pUCBtS93</name>
</geneLocation>
<protein>
    <recommendedName>
        <fullName>Pesticidal crystal protein Cry1Ab</fullName>
    </recommendedName>
    <alternativeName>
        <fullName>130 kDa crystal protein</fullName>
    </alternativeName>
    <alternativeName>
        <fullName>Crystaline entomocidal protoxin</fullName>
    </alternativeName>
    <alternativeName>
        <fullName>Insecticidal delta-endotoxin CryIA(b)</fullName>
    </alternativeName>
</protein>
<proteinExistence type="evidence at protein level"/>
<organism>
    <name type="scientific">Bacillus thuringiensis subsp. kurstaki</name>
    <dbReference type="NCBI Taxonomy" id="29339"/>
    <lineage>
        <taxon>Bacteria</taxon>
        <taxon>Bacillati</taxon>
        <taxon>Bacillota</taxon>
        <taxon>Bacilli</taxon>
        <taxon>Bacillales</taxon>
        <taxon>Bacillaceae</taxon>
        <taxon>Bacillus</taxon>
        <taxon>Bacillus cereus group</taxon>
    </lineage>
</organism>
<feature type="chain" id="PRO_0000174023" description="Pesticidal crystal protein Cry1Ab">
    <location>
        <begin position="1"/>
        <end position="1155"/>
    </location>
</feature>
<feature type="sequence conflict" description="In Ref. 2; AAA22613." evidence="2" ref="2">
    <original>A</original>
    <variation>R</variation>
    <location>
        <position position="207"/>
    </location>
</feature>
<feature type="sequence conflict" description="In Ref. 2; AAA22613." evidence="2" ref="2">
    <original>VLDGTEFAYGTSSNLPSAVYRKSGT</original>
    <variation>GPDGGRICLWNLLKFGQPPYTEKAEP</variation>
    <location>
        <begin position="382"/>
        <end position="406"/>
    </location>
</feature>
<feature type="sequence conflict" description="In Ref. 2; AAA22613." evidence="2" ref="2">
    <original>L</original>
    <variation>P</variation>
    <location>
        <position position="410"/>
    </location>
</feature>
<feature type="sequence conflict" description="In Ref. 2; AAA22613." evidence="2" ref="2">
    <original>LSH</original>
    <variation>CLAY</variation>
    <location>
        <begin position="430"/>
        <end position="432"/>
    </location>
</feature>
<feature type="sequence conflict" description="In Ref. 2; AAA22613." evidence="2" ref="2">
    <original>R</original>
    <variation>Y</variation>
    <location>
        <position position="437"/>
    </location>
</feature>
<feature type="sequence conflict" description="In Ref. 2; AAA22613." evidence="2" ref="2">
    <original>I</original>
    <variation>V</variation>
    <location>
        <position position="447"/>
    </location>
</feature>
<feature type="sequence conflict" description="In Ref. 2; AAA22613." evidence="2" ref="2">
    <original>MFSWIHR</original>
    <variation>NDSSWTYC</variation>
    <location>
        <begin position="452"/>
        <end position="458"/>
    </location>
</feature>
<feature type="sequence conflict" description="In Ref. 5; AAA22420." evidence="2" ref="5">
    <original>E</original>
    <variation>N</variation>
    <location>
        <position position="461"/>
    </location>
</feature>
<feature type="sequence conflict" description="In Ref. 2; AAA22613." evidence="2" ref="2">
    <original>NNI</original>
    <variation>GDV</variation>
    <location>
        <begin position="463"/>
        <end position="465"/>
    </location>
</feature>
<feature type="sequence conflict" description="In Ref. 2; AAA22613." evidence="2" ref="2">
    <original>STNLGSGT</original>
    <variation>LQSWLWN</variation>
    <location>
        <begin position="479"/>
        <end position="486"/>
    </location>
</feature>
<feature type="sequence conflict" description="In Ref. 2; AAA22613." evidence="2" ref="2">
    <original>P</original>
    <variation>L</variation>
    <location>
        <position position="492"/>
    </location>
</feature>
<feature type="sequence conflict" description="In Ref. 2; AAA22613." evidence="2" ref="2">
    <original>RRTSP</original>
    <variation>EELT</variation>
    <location>
        <begin position="501"/>
        <end position="505"/>
    </location>
</feature>
<feature type="sequence conflict" description="In Ref. 5; AAA22420." evidence="2" ref="5">
    <original>D</original>
    <variation>H</variation>
    <location>
        <position position="542"/>
    </location>
</feature>
<feature type="sequence conflict" description="In Ref. 5; AAA22420." evidence="2" ref="5">
    <original>TV</original>
    <variation>HL</variation>
    <location>
        <begin position="568"/>
        <end position="569"/>
    </location>
</feature>
<feature type="sequence conflict" description="In Ref. 5; AAA22420." evidence="2" ref="5">
    <original>K</original>
    <variation>E</variation>
    <location>
        <position position="665"/>
    </location>
</feature>
<feature type="sequence conflict" description="In Ref. 5; AAA22420." evidence="2" ref="5">
    <original>KR</original>
    <variation>NG</variation>
    <location>
        <begin position="675"/>
        <end position="676"/>
    </location>
</feature>
<feature type="sequence conflict" description="In Ref. 2; AAA22613." evidence="2" ref="2">
    <original>S</original>
    <variation>N</variation>
    <location>
        <position position="703"/>
    </location>
</feature>
<feature type="sequence conflict" description="In Ref. 2; AAA22613." evidence="2" ref="2">
    <original>D</original>
    <variation>H</variation>
    <location>
        <position position="712"/>
    </location>
</feature>
<feature type="sequence conflict" description="In Ref. 4; no nucleotide entry." evidence="2" ref="4">
    <original>A</original>
    <variation>E</variation>
    <location>
        <position position="832"/>
    </location>
</feature>
<feature type="sequence conflict" description="In Ref. 5; AAA22420." evidence="2" ref="5">
    <original>N</original>
    <variation>I</variation>
    <location>
        <position position="836"/>
    </location>
</feature>
<feature type="sequence conflict" description="In Ref. 4; no nucleotide entry." evidence="2" ref="4">
    <original>EK</original>
    <variation>GRA</variation>
    <location>
        <begin position="842"/>
        <end position="843"/>
    </location>
</feature>
<feature type="sequence conflict" description="In Ref. 5; AAA22420." evidence="2" ref="5">
    <original>E</original>
    <variation>T</variation>
    <location>
        <position position="1016"/>
    </location>
</feature>
<feature type="sequence conflict" description="In Ref. 5; AAA22420." evidence="2" ref="5">
    <original>E</original>
    <variation>G</variation>
    <location>
        <position position="1060"/>
    </location>
</feature>
<reference key="1">
    <citation type="journal article" date="1986" name="Gene">
        <title>The hypervariable region in the genes coding for entomopathogenic crystal proteins of Bacillus thuringiensis: nucleotide sequence of the kurhd1 gene of subsp. kurstaki HD1.</title>
        <authorList>
            <person name="Geiser M."/>
            <person name="Schweitzer S."/>
            <person name="Grimm C."/>
        </authorList>
    </citation>
    <scope>NUCLEOTIDE SEQUENCE [GENOMIC DNA]</scope>
    <source>
        <strain>HD-1</strain>
    </source>
</reference>
<reference key="2">
    <citation type="journal article" date="1986" name="J. Bacteriol.">
        <title>Structural similarity between the lepidoptera- and diptera-specific insecticidal endotoxin genes of Bacillus thuringiensis subsp. 'kurstaki' and 'israelensis'.</title>
        <authorList>
            <person name="Thorne L."/>
            <person name="Garduno F."/>
            <person name="Thompson T."/>
            <person name="Decker D."/>
            <person name="Zounes M."/>
            <person name="Wild M."/>
            <person name="Walfield A.M."/>
            <person name="Pollock T.J."/>
        </authorList>
    </citation>
    <scope>NUCLEOTIDE SEQUENCE [GENOMIC DNA]</scope>
    <source>
        <strain>HD-1</strain>
    </source>
</reference>
<reference key="3">
    <citation type="journal article" date="1987" name="Agric. Biol. Chem.">
        <title>Cloning and nucleotide sequencing of two insecticidal delta-endotoxin genes from Bacillus thuringiensis var. kurstaki HD-1 DNA.</title>
        <authorList>
            <person name="Kondo S."/>
            <person name="Tamura N."/>
            <person name="Kunitate A."/>
            <person name="Hattori M."/>
            <person name="Akashi A."/>
            <person name="Ohmori I."/>
        </authorList>
        <dbReference type="AGRICOLA" id="IND87016057"/>
    </citation>
    <scope>NUCLEOTIDE SEQUENCE [GENOMIC DNA]</scope>
    <source>
        <strain>HD-1</strain>
    </source>
</reference>
<reference key="4">
    <citation type="journal article" date="1987" name="Biotechnology (N.Y.)">
        <title>Insect tolerant transgenic tomato plants.</title>
        <authorList>
            <person name="Fischhoff D.A."/>
            <person name="Bowdish K.S."/>
            <person name="Perlak F.J."/>
            <person name="Marrone P.G."/>
            <person name="McCormick S.M."/>
            <person name="Niedermeyer J.G."/>
            <person name="Dean D.A."/>
            <person name="Kusano-Kretzmer K."/>
            <person name="Mayer E.J."/>
            <person name="Rochester D.E."/>
            <person name="Rogers S.G."/>
            <person name="Fraley R.T."/>
        </authorList>
    </citation>
    <scope>NUCLEOTIDE SEQUENCE [GENOMIC DNA]</scope>
    <source>
        <strain>HD-1</strain>
    </source>
</reference>
<reference key="5">
    <citation type="journal article" date="1987" name="J. Biotechnol.">
        <title>Sequence of a lepidopteran toxin gene of Bacillus thuringiensis subsp kurstaki NRD-12.</title>
        <authorList>
            <person name="Hefford M.A."/>
            <person name="Brousseau R."/>
            <person name="Prefontaine G."/>
            <person name="Hanna Z."/>
            <person name="Condie J.A."/>
            <person name="Lau P.C.K."/>
        </authorList>
    </citation>
    <scope>NUCLEOTIDE SEQUENCE [GENOMIC DNA]</scope>
    <source>
        <strain>NRD-12</strain>
    </source>
</reference>
<reference key="6">
    <citation type="journal article" date="1999" name="Can. J. Microbiol.">
        <title>Characterization of Bacillus thuringiensis subsp. kurstaki strain S93 effective against the Fall armyworm, Spodoptera frugiperda and cloning of a cry1Ab gene.</title>
        <authorList>
            <person name="Silva-Werneck J.O."/>
            <person name="De-Souza M.T."/>
            <person name="Dias J.M.C.S."/>
            <person name="Ribeiro B.M."/>
        </authorList>
    </citation>
    <scope>NUCLEOTIDE SEQUENCE [GENOMIC DNA]</scope>
    <source>
        <strain>S93</strain>
        <plasmid>pUCBtS93</plasmid>
    </source>
</reference>
<sequence length="1155" mass="130624">MDNNPNINECIPYNCLSNPEVEVLGGERIETGYTPIDISLSLTQFLLSEFVPGAGFVLGLVDIIWGIFGPSQWDAFLVQIEQLINQRIEEFARNQAISRLEGLSNLYQIYAESFREWEADPTNPALREEMRIQFNDMNSALTTAIPLFAVQNYQVPLLSVYVQAANLHLSVLRDVSVFGQRWGFDAATINSRYNDLTRLIGNYTDHAVRWYNTGLERVWGPDSRDWIRYNQFRRELTLTVLDIVSLFPNYDSRTYPIRTVSQLTREIYTNPVLENFDGSFRGSAQGIEGSIRSPHLMDILNSITIYTDAHRGEYYWSGHQIMASPVGFSGPEFTFPLYGTMGNAAPQQRIVAQLGQGVYRTLSSTLYRRPFNIGINNQQLSVLDGTEFAYGTSSNLPSAVYRKSGTVDSLDEIPPQNNNVPPRQGFSHRLSHVSMFRSGFSNSSVSIIRAPMFSWIHRSAEFNNIIPSSQITQIPLTKSTNLGSGTSVVKGPGFTGGDILRRTSPGQISTLRVNITAPLSQRYRVRIRYASTTNLQFHTSIDGRPINQGNFSATMSSGSNLQSGSFRTVGFTTPFNFSNGSSVFTLSAHVFNSGNEVYIDRIEFVPAEVTFEAEYDLERAQKAVNELFTSSNQIGLKTDVTDYHIDQVSNLVECLSDEFCLDEKKELSEKVKHAKRLSDERNLLQDPNFRGINRQLDRGWRGSTDITIQGGDDVFKENYVTLLGTFDECYPTYLYQKIDESKLKAYTRYQLRGYIEDSQDLEIYLIRYNAKHETVNVPGTGSLWPLSAPSPIGKCAHHSHHFSLDIDVGCTDLNEDLGVWVIFKIKTQDGHARLGNLEFLEEKPLVGEALARVKRAEKKWRDKREKLEWETNIVYKEAKESVDALFVNSQYDRLQADTNIAMIHAADKRVHSIREAYLPELSVIPGVNAAIFEELEGRIFTAFSLYDARNVIKNGDFNNGLSCWNVKGHVDVEEQNNHRSVLVVPEWEAEVSQEVRVCPGRGYILRVTAYKEGYGEGCVTIHEIENNTDELKFSNCVEEEVYPNNTVTCNDYTATQEEYEGTYTSRNRGYDGAYESNSSVPADYASAYEEKAYTDGRRDNPCESNRGYGDYTPLPAGYVTKELEYFPETDKVWIEIGETEGTFIVDSVELLLMEE</sequence>